<accession>Q7XJJ7</accession>
<accession>Q93ZI9</accession>
<accession>Q9FGF2</accession>
<accession>Q9LLC0</accession>
<proteinExistence type="evidence at protein level"/>
<feature type="chain" id="PRO_0000414026" description="Fatty acid amide hydrolase">
    <location>
        <begin position="1"/>
        <end position="607"/>
    </location>
</feature>
<feature type="active site" description="Charge relay system" evidence="15">
    <location>
        <position position="205"/>
    </location>
</feature>
<feature type="active site" description="Charge relay system" evidence="15">
    <location>
        <position position="281"/>
    </location>
</feature>
<feature type="active site" description="Acyl-ester intermediate" evidence="15">
    <location>
        <position position="305"/>
    </location>
</feature>
<feature type="binding site" evidence="10 18">
    <location>
        <begin position="302"/>
        <end position="305"/>
    </location>
    <ligand>
        <name>substrate</name>
    </ligand>
</feature>
<feature type="mutagenesis site" description="Loss of activity." evidence="6">
    <original>K</original>
    <variation>A</variation>
    <location>
        <position position="205"/>
    </location>
</feature>
<feature type="mutagenesis site" description="Loss of activity." evidence="6">
    <original>SS</original>
    <variation>AA</variation>
    <location>
        <begin position="281"/>
        <end position="282"/>
    </location>
</feature>
<feature type="mutagenesis site" description="Loss of activity." evidence="6">
    <original>S</original>
    <variation>A</variation>
    <location>
        <position position="305"/>
    </location>
</feature>
<feature type="mutagenesis site" description="Loss of activity." evidence="6">
    <original>R</original>
    <variation>A</variation>
    <location>
        <position position="307"/>
    </location>
</feature>
<feature type="mutagenesis site" description="No effect." evidence="6">
    <original>S</original>
    <variation>A</variation>
    <location>
        <position position="360"/>
    </location>
</feature>
<feature type="sequence conflict" description="In Ref. 3; BAB11605 and 1; AAF73891." evidence="13" ref="3 1">
    <original>R</original>
    <variation>W</variation>
    <location>
        <position position="127"/>
    </location>
</feature>
<feature type="sequence conflict" description="In Ref. 1; AAF73891." evidence="13" ref="1">
    <original>M</original>
    <variation>R</variation>
    <location>
        <position position="571"/>
    </location>
</feature>
<feature type="strand" evidence="22">
    <location>
        <begin position="10"/>
        <end position="12"/>
    </location>
</feature>
<feature type="helix" evidence="19">
    <location>
        <begin position="15"/>
        <end position="17"/>
    </location>
</feature>
<feature type="strand" evidence="21">
    <location>
        <begin position="29"/>
        <end position="31"/>
    </location>
</feature>
<feature type="helix" evidence="19">
    <location>
        <begin position="32"/>
        <end position="42"/>
    </location>
</feature>
<feature type="helix" evidence="19">
    <location>
        <begin position="47"/>
        <end position="58"/>
    </location>
</feature>
<feature type="helix" evidence="19">
    <location>
        <begin position="61"/>
        <end position="66"/>
    </location>
</feature>
<feature type="strand" evidence="19">
    <location>
        <begin position="67"/>
        <end position="69"/>
    </location>
</feature>
<feature type="strand" evidence="19">
    <location>
        <begin position="87"/>
        <end position="91"/>
    </location>
</feature>
<feature type="strand" evidence="20">
    <location>
        <begin position="94"/>
        <end position="96"/>
    </location>
</feature>
<feature type="helix" evidence="19">
    <location>
        <begin position="98"/>
        <end position="106"/>
    </location>
</feature>
<feature type="helix" evidence="20">
    <location>
        <begin position="114"/>
        <end position="116"/>
    </location>
</feature>
<feature type="helix" evidence="19">
    <location>
        <begin position="131"/>
        <end position="139"/>
    </location>
</feature>
<feature type="helix" evidence="19">
    <location>
        <begin position="145"/>
        <end position="159"/>
    </location>
</feature>
<feature type="turn" evidence="19">
    <location>
        <begin position="160"/>
        <end position="162"/>
    </location>
</feature>
<feature type="strand" evidence="21">
    <location>
        <begin position="163"/>
        <end position="166"/>
    </location>
</feature>
<feature type="strand" evidence="19">
    <location>
        <begin position="168"/>
        <end position="171"/>
    </location>
</feature>
<feature type="helix" evidence="19">
    <location>
        <begin position="174"/>
        <end position="189"/>
    </location>
</feature>
<feature type="turn" evidence="19">
    <location>
        <begin position="196"/>
        <end position="199"/>
    </location>
</feature>
<feature type="strand" evidence="19">
    <location>
        <begin position="201"/>
        <end position="205"/>
    </location>
</feature>
<feature type="helix" evidence="19">
    <location>
        <begin position="222"/>
        <end position="225"/>
    </location>
</feature>
<feature type="helix" evidence="19">
    <location>
        <begin position="233"/>
        <end position="240"/>
    </location>
</feature>
<feature type="strand" evidence="19">
    <location>
        <begin position="244"/>
        <end position="249"/>
    </location>
</feature>
<feature type="helix" evidence="19">
    <location>
        <begin position="253"/>
        <end position="255"/>
    </location>
</feature>
<feature type="turn" evidence="19">
    <location>
        <begin position="263"/>
        <end position="265"/>
    </location>
</feature>
<feature type="strand" evidence="19">
    <location>
        <begin position="273"/>
        <end position="277"/>
    </location>
</feature>
<feature type="strand" evidence="19">
    <location>
        <begin position="280"/>
        <end position="282"/>
    </location>
</feature>
<feature type="helix" evidence="19">
    <location>
        <begin position="283"/>
        <end position="290"/>
    </location>
</feature>
<feature type="strand" evidence="19">
    <location>
        <begin position="293"/>
        <end position="304"/>
    </location>
</feature>
<feature type="helix" evidence="19">
    <location>
        <begin position="307"/>
        <end position="313"/>
    </location>
</feature>
<feature type="strand" evidence="19">
    <location>
        <begin position="315"/>
        <end position="319"/>
    </location>
</feature>
<feature type="turn" evidence="21">
    <location>
        <begin position="322"/>
        <end position="324"/>
    </location>
</feature>
<feature type="turn" evidence="19">
    <location>
        <begin position="331"/>
        <end position="334"/>
    </location>
</feature>
<feature type="strand" evidence="19">
    <location>
        <begin position="339"/>
        <end position="346"/>
    </location>
</feature>
<feature type="helix" evidence="19">
    <location>
        <begin position="347"/>
        <end position="357"/>
    </location>
</feature>
<feature type="helix" evidence="19">
    <location>
        <begin position="362"/>
        <end position="368"/>
    </location>
</feature>
<feature type="strand" evidence="19">
    <location>
        <begin position="374"/>
        <end position="376"/>
    </location>
</feature>
<feature type="helix" evidence="19">
    <location>
        <begin position="385"/>
        <end position="388"/>
    </location>
</feature>
<feature type="strand" evidence="19">
    <location>
        <begin position="391"/>
        <end position="394"/>
    </location>
</feature>
<feature type="helix" evidence="19">
    <location>
        <begin position="396"/>
        <end position="399"/>
    </location>
</feature>
<feature type="helix" evidence="19">
    <location>
        <begin position="405"/>
        <end position="422"/>
    </location>
</feature>
<feature type="strand" evidence="19">
    <location>
        <begin position="425"/>
        <end position="428"/>
    </location>
</feature>
<feature type="helix" evidence="19">
    <location>
        <begin position="434"/>
        <end position="458"/>
    </location>
</feature>
<feature type="helix" evidence="19">
    <location>
        <begin position="461"/>
        <end position="464"/>
    </location>
</feature>
<feature type="helix" evidence="19">
    <location>
        <begin position="467"/>
        <end position="476"/>
    </location>
</feature>
<feature type="helix" evidence="19">
    <location>
        <begin position="481"/>
        <end position="504"/>
    </location>
</feature>
<feature type="strand" evidence="19">
    <location>
        <begin position="506"/>
        <end position="512"/>
    </location>
</feature>
<feature type="strand" evidence="20">
    <location>
        <begin position="514"/>
        <end position="517"/>
    </location>
</feature>
<feature type="helix" evidence="19">
    <location>
        <begin position="522"/>
        <end position="525"/>
    </location>
</feature>
<feature type="strand" evidence="21">
    <location>
        <begin position="529"/>
        <end position="531"/>
    </location>
</feature>
<feature type="helix" evidence="19">
    <location>
        <begin position="532"/>
        <end position="538"/>
    </location>
</feature>
<feature type="turn" evidence="19">
    <location>
        <begin position="539"/>
        <end position="542"/>
    </location>
</feature>
<feature type="helix" evidence="19">
    <location>
        <begin position="543"/>
        <end position="548"/>
    </location>
</feature>
<feature type="strand" evidence="19">
    <location>
        <begin position="552"/>
        <end position="559"/>
    </location>
</feature>
<feature type="strand" evidence="19">
    <location>
        <begin position="565"/>
        <end position="573"/>
    </location>
</feature>
<feature type="helix" evidence="19">
    <location>
        <begin position="577"/>
        <end position="590"/>
    </location>
</feature>
<protein>
    <recommendedName>
        <fullName evidence="11">Fatty acid amide hydrolase</fullName>
        <shortName evidence="12">AtFAAH</shortName>
        <ecNumber evidence="1">3.5.1.99</ecNumber>
    </recommendedName>
    <alternativeName>
        <fullName evidence="11">N-acylethanolamine amidohydrolase</fullName>
    </alternativeName>
</protein>
<comment type="function">
    <text evidence="1 2 3 4 5 6 7 8 9 14">Catalyzes the hydrolysis of bioactive endogenous fatty acid amides to their corresponding acids (PubMed:12824167). The hydrolysis of endogenous amidated lipids terminates their participation as lipid mediators in various signaling systems (Probable). Converts a wide range of N-acylethanolamines (NAEs) to their corresponding free fatty acids and ethanolamine (PubMed:12824167, PubMed:16624618, PubMed:16738862, PubMed:16880402). Can use oleamide as substrate, but not indole-3-acetamide, 1-naphtalene-acetamide, nicotinic acid amide or L-asparagine (PubMed:16738862). Can use 2-arachidonylglycerol as substrate (PubMed:19801664). Participates in the regulation of plant growth (PubMed:16880402). Hydrolyzes N-dodecanoylethanolamine, which is has a growth inhibitory effect on seedling growth (PubMed:28112243). Involved in plant defense signaling (PubMed:18643971). Involved in abscisic acid (ABA) signaling through mechanisms that are independent of the catalytic activity (PubMed:19801664). Involved in the regulation of flowering time (PubMed:22645580). Catalyzes the hydrolysis of N-acyl L-homoserine lactones (AHLs), which are a class of signaling molecules produced by bacteria for quorum sensing (PubMed:24918118). Accumulation of L-homoserine appears to encourage plant growth at low concentrations by stimulating transpiration, but higher concentrations inhibit growth by stimulating ethylene production (PubMed:24918118).</text>
</comment>
<comment type="catalytic activity">
    <reaction evidence="1">
        <text>N-(5Z,8Z,11Z,14Z-eicosatetraenoyl)-ethanolamine + H2O = ethanolamine + (5Z,8Z,11Z,14Z)-eicosatetraenoate</text>
        <dbReference type="Rhea" id="RHEA:26136"/>
        <dbReference type="ChEBI" id="CHEBI:2700"/>
        <dbReference type="ChEBI" id="CHEBI:15377"/>
        <dbReference type="ChEBI" id="CHEBI:32395"/>
        <dbReference type="ChEBI" id="CHEBI:57603"/>
        <dbReference type="EC" id="3.5.1.99"/>
    </reaction>
    <physiologicalReaction direction="left-to-right" evidence="1">
        <dbReference type="Rhea" id="RHEA:26137"/>
    </physiologicalReaction>
</comment>
<comment type="catalytic activity">
    <reaction evidence="1 2 3 4">
        <text>N-(9Z,12Z-octadecadienoyl)-ethanolamine + H2O = ethanolamine + (9Z,12Z)-octadecadienoate</text>
        <dbReference type="Rhea" id="RHEA:35567"/>
        <dbReference type="ChEBI" id="CHEBI:15377"/>
        <dbReference type="ChEBI" id="CHEBI:30245"/>
        <dbReference type="ChEBI" id="CHEBI:57603"/>
        <dbReference type="ChEBI" id="CHEBI:64032"/>
    </reaction>
    <physiologicalReaction direction="left-to-right" evidence="1 2 3 4">
        <dbReference type="Rhea" id="RHEA:35568"/>
    </physiologicalReaction>
</comment>
<comment type="catalytic activity">
    <reaction evidence="1 2 3 6">
        <text>N-hexadecanoylethanolamine + H2O = ethanolamine + hexadecanoate</text>
        <dbReference type="Rhea" id="RHEA:45064"/>
        <dbReference type="ChEBI" id="CHEBI:7896"/>
        <dbReference type="ChEBI" id="CHEBI:15377"/>
        <dbReference type="ChEBI" id="CHEBI:57603"/>
        <dbReference type="ChEBI" id="CHEBI:71464"/>
    </reaction>
    <physiologicalReaction direction="left-to-right" evidence="1 2 3">
        <dbReference type="Rhea" id="RHEA:45065"/>
    </physiologicalReaction>
</comment>
<comment type="catalytic activity">
    <reaction evidence="1">
        <text>N-tetradecanoylethanolamine + H2O = tetradecanoate + ethanolamine</text>
        <dbReference type="Rhea" id="RHEA:45452"/>
        <dbReference type="ChEBI" id="CHEBI:15377"/>
        <dbReference type="ChEBI" id="CHEBI:30807"/>
        <dbReference type="ChEBI" id="CHEBI:57603"/>
        <dbReference type="ChEBI" id="CHEBI:85262"/>
    </reaction>
    <physiologicalReaction direction="left-to-right" evidence="1">
        <dbReference type="Rhea" id="RHEA:45453"/>
    </physiologicalReaction>
</comment>
<comment type="catalytic activity">
    <reaction evidence="1 2 4">
        <text>N-dodecanoylethanolamine + H2O = dodecanoate + ethanolamine</text>
        <dbReference type="Rhea" id="RHEA:45456"/>
        <dbReference type="ChEBI" id="CHEBI:15377"/>
        <dbReference type="ChEBI" id="CHEBI:18262"/>
        <dbReference type="ChEBI" id="CHEBI:57603"/>
        <dbReference type="ChEBI" id="CHEBI:85263"/>
    </reaction>
    <physiologicalReaction direction="left-to-right" evidence="1 2 4">
        <dbReference type="Rhea" id="RHEA:45457"/>
    </physiologicalReaction>
</comment>
<comment type="activity regulation">
    <text evidence="1 2">Inhibited by methyl arachidonyl fluorophosphonate (MAFP).</text>
</comment>
<comment type="biophysicochemical properties">
    <kinetics>
        <KM evidence="1">13.6 uM for N-acylethanolamine 20:4</KM>
        <KM evidence="1">26.2 uM for N-acylethanolamine 18:2</KM>
        <KM evidence="2">54 uM for N-acylethanolamine 18:2</KM>
        <KM evidence="1">50.8 uM for N-acylethanolamine 16:0</KM>
        <KM evidence="2">20 uM for N-acylethanolamine 16:0</KM>
        <KM evidence="6">23 uM for N-acylethanolamine 16:0</KM>
        <KM evidence="1">37 uM for N-acylethanolamine 14:0</KM>
        <KM evidence="1">17.6 uM for N-acylethanolamine 12:0</KM>
        <KM evidence="2">25 uM for N-acylethanolamine 12:0</KM>
        <Vmax evidence="1">17.9 umol/h/mg enzyme with N-acylethanolamine 20:4 as substrate</Vmax>
        <Vmax evidence="1">14.1 umol/h/mg enzyme with N-acylethanolamine 18:2 as substrate</Vmax>
        <Vmax evidence="1">12.1 umol/h/mg enzyme with N-acylethanolamine 16:0 as substrate</Vmax>
        <Vmax evidence="6">181.7 umol/h/mg enzyme with N-acylethanolamine 16:0 as substrate</Vmax>
        <Vmax evidence="1">9.1 umol/h/mg enzyme with N-acylethanolamine 14:0 as substrate</Vmax>
        <Vmax evidence="1">13.9 umol/h/mg enzyme with N-acylethanolamine 12:0 as substrate</Vmax>
    </kinetics>
</comment>
<comment type="subunit">
    <text evidence="10">Forms homodimers.</text>
</comment>
<comment type="subcellular location">
    <subcellularLocation>
        <location evidence="5">Endoplasmic reticulum membrane</location>
    </subcellularLocation>
    <subcellularLocation>
        <location evidence="5">Cell membrane</location>
    </subcellularLocation>
</comment>
<comment type="tissue specificity">
    <text evidence="3 4">Expressed in roots, leaves and flowers (PubMed:16738862). Expressed in seedlings, flowers, roots, siliques, seeds and leaves (PubMed:16880402).</text>
</comment>
<comment type="developmental stage">
    <text evidence="4">Up-regulated during seed germination and early postgerminative seedling growth.</text>
</comment>
<comment type="disruption phenotype">
    <text evidence="4">No visible phenotype under normal growth conditions (PubMed:16880402). Enhanced sensitivity to inhibition of seedling growth induced by exogenous N-acylethanolamine.</text>
</comment>
<comment type="miscellaneous">
    <text evidence="4 5 6 7">Plants overexpressing FAAH exhibit accelerated seedling growth (PubMed:16880402). Plants overexpressing FAAH exhibit enhanced susceptibility to the bacterial pathogen Pseudomons syringae pv tomato (PubMed:18643971). Plants overexpressing FAAH exhibit enhanced sensitivity to abscisic acid (ABA) (PubMed:19801664). Plants overexpressing FAAH exhibit early flowering (PubMed:22645580).</text>
</comment>
<comment type="similarity">
    <text evidence="13">Belongs to the amidase family.</text>
</comment>
<comment type="sequence caution" evidence="13">
    <conflict type="frameshift">
        <sequence resource="EMBL-CDS" id="AAL09742"/>
    </conflict>
</comment>
<evidence type="ECO:0000269" key="1">
    <source>
    </source>
</evidence>
<evidence type="ECO:0000269" key="2">
    <source>
    </source>
</evidence>
<evidence type="ECO:0000269" key="3">
    <source>
    </source>
</evidence>
<evidence type="ECO:0000269" key="4">
    <source>
    </source>
</evidence>
<evidence type="ECO:0000269" key="5">
    <source>
    </source>
</evidence>
<evidence type="ECO:0000269" key="6">
    <source>
    </source>
</evidence>
<evidence type="ECO:0000269" key="7">
    <source>
    </source>
</evidence>
<evidence type="ECO:0000269" key="8">
    <source>
    </source>
</evidence>
<evidence type="ECO:0000269" key="9">
    <source>
    </source>
</evidence>
<evidence type="ECO:0000269" key="10">
    <source>
    </source>
</evidence>
<evidence type="ECO:0000303" key="11">
    <source>
    </source>
</evidence>
<evidence type="ECO:0000303" key="12">
    <source>
    </source>
</evidence>
<evidence type="ECO:0000305" key="13"/>
<evidence type="ECO:0000305" key="14">
    <source>
    </source>
</evidence>
<evidence type="ECO:0000305" key="15">
    <source>
    </source>
</evidence>
<evidence type="ECO:0000312" key="16">
    <source>
        <dbReference type="EMBL" id="AED97893.1"/>
    </source>
</evidence>
<evidence type="ECO:0000312" key="17">
    <source>
        <dbReference type="EMBL" id="BAB11605.1"/>
    </source>
</evidence>
<evidence type="ECO:0007744" key="18">
    <source>
        <dbReference type="PDB" id="6DII"/>
    </source>
</evidence>
<evidence type="ECO:0007829" key="19">
    <source>
        <dbReference type="PDB" id="6DHV"/>
    </source>
</evidence>
<evidence type="ECO:0007829" key="20">
    <source>
        <dbReference type="PDB" id="6DII"/>
    </source>
</evidence>
<evidence type="ECO:0007829" key="21">
    <source>
        <dbReference type="PDB" id="8EWW"/>
    </source>
</evidence>
<evidence type="ECO:0007829" key="22">
    <source>
        <dbReference type="PDB" id="8EY1"/>
    </source>
</evidence>
<reference key="1">
    <citation type="submission" date="2000-01" db="EMBL/GenBank/DDBJ databases">
        <title>Cloning and characterization of an amidase gene frome Arabidopsis thaliana.</title>
        <authorList>
            <person name="Chang W.-Z."/>
            <person name="Soll D."/>
        </authorList>
    </citation>
    <scope>NUCLEOTIDE SEQUENCE [MRNA]</scope>
</reference>
<reference key="2">
    <citation type="journal article" date="2003" name="J. Biol. Chem.">
        <title>Molecular identification of a functional homologue of the mammalian fatty acid amide hydrolase in Arabidopsis thaliana.</title>
        <authorList>
            <person name="Shrestha R."/>
            <person name="Dixon R.A."/>
            <person name="Chapman K.D."/>
        </authorList>
    </citation>
    <scope>NUCLEOTIDE SEQUENCE [MRNA]</scope>
    <scope>FUNCTION</scope>
    <scope>CATALYTIC ACTIVITY</scope>
    <scope>BIOPHYSICOCHEMICAL PROPERTIES</scope>
    <scope>ACTIVITY REGULATION</scope>
    <source>
        <tissue>Leaf</tissue>
    </source>
</reference>
<reference key="3">
    <citation type="submission" date="1999-04" db="EMBL/GenBank/DDBJ databases">
        <title>Structural analysis of Arabidopsis thaliana chromosome 5. XI.</title>
        <authorList>
            <person name="Kaneko T."/>
            <person name="Katoh T."/>
            <person name="Asamizu E."/>
            <person name="Sato S."/>
            <person name="Nakamura Y."/>
            <person name="Kotani H."/>
            <person name="Tabata S."/>
        </authorList>
    </citation>
    <scope>NUCLEOTIDE SEQUENCE [LARGE SCALE GENOMIC DNA]</scope>
    <source>
        <strain>cv. Columbia</strain>
    </source>
</reference>
<reference key="4">
    <citation type="journal article" date="2017" name="Plant J.">
        <title>Araport11: a complete reannotation of the Arabidopsis thaliana reference genome.</title>
        <authorList>
            <person name="Cheng C.Y."/>
            <person name="Krishnakumar V."/>
            <person name="Chan A.P."/>
            <person name="Thibaud-Nissen F."/>
            <person name="Schobel S."/>
            <person name="Town C.D."/>
        </authorList>
    </citation>
    <scope>GENOME REANNOTATION</scope>
    <source>
        <strain>cv. Columbia</strain>
    </source>
</reference>
<reference key="5">
    <citation type="journal article" date="2003" name="Science">
        <title>Empirical analysis of transcriptional activity in the Arabidopsis genome.</title>
        <authorList>
            <person name="Yamada K."/>
            <person name="Lim J."/>
            <person name="Dale J.M."/>
            <person name="Chen H."/>
            <person name="Shinn P."/>
            <person name="Palm C.J."/>
            <person name="Southwick A.M."/>
            <person name="Wu H.C."/>
            <person name="Kim C.J."/>
            <person name="Nguyen M."/>
            <person name="Pham P.K."/>
            <person name="Cheuk R.F."/>
            <person name="Karlin-Newmann G."/>
            <person name="Liu S.X."/>
            <person name="Lam B."/>
            <person name="Sakano H."/>
            <person name="Wu T."/>
            <person name="Yu G."/>
            <person name="Miranda M."/>
            <person name="Quach H.L."/>
            <person name="Tripp M."/>
            <person name="Chang C.H."/>
            <person name="Lee J.M."/>
            <person name="Toriumi M.J."/>
            <person name="Chan M.M."/>
            <person name="Tang C.C."/>
            <person name="Onodera C.S."/>
            <person name="Deng J.M."/>
            <person name="Akiyama K."/>
            <person name="Ansari Y."/>
            <person name="Arakawa T."/>
            <person name="Banh J."/>
            <person name="Banno F."/>
            <person name="Bowser L."/>
            <person name="Brooks S.Y."/>
            <person name="Carninci P."/>
            <person name="Chao Q."/>
            <person name="Choy N."/>
            <person name="Enju A."/>
            <person name="Goldsmith A.D."/>
            <person name="Gurjal M."/>
            <person name="Hansen N.F."/>
            <person name="Hayashizaki Y."/>
            <person name="Johnson-Hopson C."/>
            <person name="Hsuan V.W."/>
            <person name="Iida K."/>
            <person name="Karnes M."/>
            <person name="Khan S."/>
            <person name="Koesema E."/>
            <person name="Ishida J."/>
            <person name="Jiang P.X."/>
            <person name="Jones T."/>
            <person name="Kawai J."/>
            <person name="Kamiya A."/>
            <person name="Meyers C."/>
            <person name="Nakajima M."/>
            <person name="Narusaka M."/>
            <person name="Seki M."/>
            <person name="Sakurai T."/>
            <person name="Satou M."/>
            <person name="Tamse R."/>
            <person name="Vaysberg M."/>
            <person name="Wallender E.K."/>
            <person name="Wong C."/>
            <person name="Yamamura Y."/>
            <person name="Yuan S."/>
            <person name="Shinozaki K."/>
            <person name="Davis R.W."/>
            <person name="Theologis A."/>
            <person name="Ecker J.R."/>
        </authorList>
    </citation>
    <scope>NUCLEOTIDE SEQUENCE [LARGE SCALE MRNA]</scope>
    <source>
        <strain>cv. Columbia</strain>
    </source>
</reference>
<reference key="6">
    <citation type="journal article" date="2006" name="Biochim. Biophys. Acta">
        <title>Plant fatty acid (ethanol) amide hydrolases.</title>
        <authorList>
            <person name="Shrestha R."/>
            <person name="Kim S.C."/>
            <person name="Dyer J.M."/>
            <person name="Dixon R.A."/>
            <person name="Chapman K.D."/>
        </authorList>
    </citation>
    <scope>FUNCTION</scope>
    <scope>CATALYTIC ACTIVITY</scope>
    <scope>ACTIVITY REGULATION</scope>
    <scope>BIOPHYSICOCHEMICAL PROPERTIES</scope>
</reference>
<reference key="7">
    <citation type="journal article" date="2006" name="Planta">
        <title>Subcellular localization and tissue specific expression of amidase 1 from Arabidopsis thaliana.</title>
        <authorList>
            <person name="Pollmann S."/>
            <person name="Neu D."/>
            <person name="Lehmann T."/>
            <person name="Berkowitz O."/>
            <person name="Schaefer T."/>
            <person name="Weiler E.W."/>
        </authorList>
    </citation>
    <scope>FUNCTION</scope>
    <scope>CATALYTIC ACTIVITY</scope>
    <scope>TISSUE SPECIFICITY</scope>
</reference>
<reference key="8">
    <citation type="journal article" date="2006" name="Proc. Natl. Acad. Sci. U.S.A.">
        <title>Manipulation of Arabidopsis fatty acid amide hydrolase expression modifies plant growth and sensitivity to N-acylethanolamines.</title>
        <authorList>
            <person name="Wang Y.S."/>
            <person name="Shrestha R."/>
            <person name="Kilaru A."/>
            <person name="Wiant W."/>
            <person name="Venables B.J."/>
            <person name="Chapman K.D."/>
            <person name="Blancaflor E.B."/>
        </authorList>
    </citation>
    <scope>FUNCTION</scope>
    <scope>CATALYTIC ACTIVITY</scope>
    <scope>TISSUE SPECIFICITY</scope>
    <scope>DEVELOPMENTAL STAGE</scope>
    <scope>DISRUPTION PHENOTYPE</scope>
</reference>
<reference key="9">
    <citation type="journal article" date="2008" name="Plant J.">
        <title>Overexpression of a fatty acid amide hydrolase compromises innate immunity in Arabidopsis.</title>
        <authorList>
            <person name="Kang L."/>
            <person name="Wang Y.S."/>
            <person name="Uppalapati S.R."/>
            <person name="Wang K."/>
            <person name="Tang Y."/>
            <person name="Vadapalli V."/>
            <person name="Venables B.J."/>
            <person name="Chapman K.D."/>
            <person name="Blancaflor E.B."/>
            <person name="Mysore K.S."/>
        </authorList>
    </citation>
    <scope>FUNCTION</scope>
    <scope>SUBCELLULAR LOCATION</scope>
</reference>
<reference key="10">
    <citation type="journal article" date="2009" name="J. Biol. Chem.">
        <title>Mutations in Arabidopsis fatty acid amide hydrolase reveal that catalytic activity influences growth but not sensitivity to abscisic acid or pathogens.</title>
        <authorList>
            <person name="Kim S.C."/>
            <person name="Kang L."/>
            <person name="Nagaraj S."/>
            <person name="Blancaflor E.B."/>
            <person name="Mysore K.S."/>
            <person name="Chapman K.D."/>
        </authorList>
    </citation>
    <scope>FUNCTION</scope>
    <scope>CATALYTIC ACTIVITY</scope>
    <scope>BIOPHYSICOCHEMICAL PROPERTIES</scope>
    <scope>MUTAGENESIS OF LYS-205; 281-SER-SER-282; SER-305; ARG-307 AND SER-360</scope>
</reference>
<reference key="11">
    <citation type="journal article" date="2012" name="Front. Plant Sci.">
        <title>Overexpression of fatty acid amide hydrolase induces early flowering in Arabidopsis thaliana.</title>
        <authorList>
            <person name="Teaster N.D."/>
            <person name="Keereetaweep J."/>
            <person name="Kilaru A."/>
            <person name="Wang Y.S."/>
            <person name="Tang Y."/>
            <person name="Tran C.N."/>
            <person name="Ayre B.G."/>
            <person name="Chapman K.D."/>
            <person name="Blancaflor E.B."/>
        </authorList>
    </citation>
    <scope>FUNCTION</scope>
</reference>
<reference key="12">
    <citation type="journal article" date="2014" name="ACS Chem. Biol.">
        <title>Plant responses to bacterial N-acyl L-homoserine lactones are dependent on enzymatic degradation to L-homoserine.</title>
        <authorList>
            <person name="Palmer A.G."/>
            <person name="Senechal A.C."/>
            <person name="Mukherjee A."/>
            <person name="Ane J.M."/>
            <person name="Blackwell H.E."/>
        </authorList>
    </citation>
    <scope>IDENTIFICATION BY MASS SPECTROMETRY</scope>
    <scope>FUNCTION</scope>
</reference>
<reference key="13">
    <citation type="journal article" date="2017" name="Sci. Rep.">
        <title>A chemical genetic screen uncovers a small molecule enhancer of the N-acylethanolamine degrading enzyme, fatty acid amide hydrolase, in Arabidopsis.</title>
        <authorList>
            <person name="Khan B.R."/>
            <person name="Faure L."/>
            <person name="Chapman K.D."/>
            <person name="Blancaflor E.B."/>
        </authorList>
    </citation>
    <scope>FUNCTION</scope>
</reference>
<reference key="14">
    <citation type="journal article" date="2019" name="J. Biol. Chem.">
        <title>Structural analysis of a plant fatty acid amide hydrolase provides insights into the evolutionary diversity of bioactive acylethanolamides.</title>
        <authorList>
            <person name="Aziz M."/>
            <person name="Wang X."/>
            <person name="Tripathi A."/>
            <person name="Bankaitis V.A."/>
            <person name="Chapman K.D."/>
        </authorList>
    </citation>
    <scope>X-RAY CRYSTALLOGRAPHY (2.10 ANGSTROMS) IN COMPLEX WITH SUBSTRATE</scope>
    <scope>SUBUNIT</scope>
</reference>
<gene>
    <name evidence="11" type="primary">FAAH</name>
    <name evidence="16" type="ordered locus">At5g64440</name>
    <name evidence="17" type="ORF">T12B11.3</name>
</gene>
<keyword id="KW-0002">3D-structure</keyword>
<keyword id="KW-1003">Cell membrane</keyword>
<keyword id="KW-0256">Endoplasmic reticulum</keyword>
<keyword id="KW-0378">Hydrolase</keyword>
<keyword id="KW-0442">Lipid degradation</keyword>
<keyword id="KW-0443">Lipid metabolism</keyword>
<keyword id="KW-0472">Membrane</keyword>
<keyword id="KW-1185">Reference proteome</keyword>
<name>FAAH_ARATH</name>
<dbReference type="EC" id="3.5.1.99" evidence="1"/>
<dbReference type="EMBL" id="AF223949">
    <property type="protein sequence ID" value="AAF73891.1"/>
    <property type="molecule type" value="mRNA"/>
</dbReference>
<dbReference type="EMBL" id="AY308736">
    <property type="protein sequence ID" value="AAP83139.1"/>
    <property type="molecule type" value="mRNA"/>
</dbReference>
<dbReference type="EMBL" id="AB025640">
    <property type="protein sequence ID" value="BAB11605.1"/>
    <property type="molecule type" value="Genomic_DNA"/>
</dbReference>
<dbReference type="EMBL" id="CP002688">
    <property type="protein sequence ID" value="AED97893.1"/>
    <property type="molecule type" value="Genomic_DNA"/>
</dbReference>
<dbReference type="EMBL" id="AY057501">
    <property type="protein sequence ID" value="AAL09742.1"/>
    <property type="status" value="ALT_FRAME"/>
    <property type="molecule type" value="mRNA"/>
</dbReference>
<dbReference type="EMBL" id="AY143870">
    <property type="protein sequence ID" value="AAN28809.1"/>
    <property type="molecule type" value="mRNA"/>
</dbReference>
<dbReference type="RefSeq" id="NP_201249.2">
    <property type="nucleotide sequence ID" value="NM_125840.4"/>
</dbReference>
<dbReference type="PDB" id="6DHV">
    <property type="method" value="X-ray"/>
    <property type="resolution" value="2.10 A"/>
    <property type="chains" value="A/B=1-607"/>
</dbReference>
<dbReference type="PDB" id="6DII">
    <property type="method" value="X-ray"/>
    <property type="resolution" value="3.20 A"/>
    <property type="chains" value="A/B/C/D/E/F/G/H/I/J/K/L=1-607"/>
</dbReference>
<dbReference type="PDB" id="8EWW">
    <property type="method" value="X-ray"/>
    <property type="resolution" value="2.80 A"/>
    <property type="chains" value="A/B=1-607"/>
</dbReference>
<dbReference type="PDB" id="8EY1">
    <property type="method" value="X-ray"/>
    <property type="resolution" value="3.20 A"/>
    <property type="chains" value="A/B/C/D/E/F/G/H/I/J/K/L=1-607"/>
</dbReference>
<dbReference type="PDB" id="8EY9">
    <property type="method" value="X-ray"/>
    <property type="resolution" value="3.59 A"/>
    <property type="chains" value="A/B/C/D/E/F/G/H/I/J/K/L=1-607"/>
</dbReference>
<dbReference type="PDBsum" id="6DHV"/>
<dbReference type="PDBsum" id="6DII"/>
<dbReference type="PDBsum" id="8EWW"/>
<dbReference type="PDBsum" id="8EY1"/>
<dbReference type="PDBsum" id="8EY9"/>
<dbReference type="SMR" id="Q7XJJ7"/>
<dbReference type="FunCoup" id="Q7XJJ7">
    <property type="interactions" value="1004"/>
</dbReference>
<dbReference type="STRING" id="3702.Q7XJJ7"/>
<dbReference type="SwissLipids" id="SLP:000001900"/>
<dbReference type="iPTMnet" id="Q7XJJ7"/>
<dbReference type="PaxDb" id="3702-AT5G64440.1"/>
<dbReference type="ProteomicsDB" id="222339"/>
<dbReference type="EnsemblPlants" id="AT5G64440.1">
    <property type="protein sequence ID" value="AT5G64440.1"/>
    <property type="gene ID" value="AT5G64440"/>
</dbReference>
<dbReference type="GeneID" id="836565"/>
<dbReference type="Gramene" id="AT5G64440.1">
    <property type="protein sequence ID" value="AT5G64440.1"/>
    <property type="gene ID" value="AT5G64440"/>
</dbReference>
<dbReference type="KEGG" id="ath:AT5G64440"/>
<dbReference type="Araport" id="AT5G64440"/>
<dbReference type="TAIR" id="AT5G64440">
    <property type="gene designation" value="FAAH"/>
</dbReference>
<dbReference type="eggNOG" id="KOG1211">
    <property type="taxonomic scope" value="Eukaryota"/>
</dbReference>
<dbReference type="HOGENOM" id="CLU_009600_0_2_1"/>
<dbReference type="InParanoid" id="Q7XJJ7"/>
<dbReference type="OMA" id="PGWHIDG"/>
<dbReference type="PhylomeDB" id="Q7XJJ7"/>
<dbReference type="BioCyc" id="ARA:AT5G64440-MONOMER"/>
<dbReference type="BRENDA" id="3.5.1.99">
    <property type="organism ID" value="399"/>
</dbReference>
<dbReference type="SABIO-RK" id="Q7XJJ7"/>
<dbReference type="PRO" id="PR:Q7XJJ7"/>
<dbReference type="Proteomes" id="UP000006548">
    <property type="component" value="Chromosome 5"/>
</dbReference>
<dbReference type="ExpressionAtlas" id="Q7XJJ7">
    <property type="expression patterns" value="baseline and differential"/>
</dbReference>
<dbReference type="GO" id="GO:0005783">
    <property type="term" value="C:endoplasmic reticulum"/>
    <property type="evidence" value="ECO:0007005"/>
    <property type="project" value="TAIR"/>
</dbReference>
<dbReference type="GO" id="GO:0005789">
    <property type="term" value="C:endoplasmic reticulum membrane"/>
    <property type="evidence" value="ECO:0007669"/>
    <property type="project" value="UniProtKB-SubCell"/>
</dbReference>
<dbReference type="GO" id="GO:0005794">
    <property type="term" value="C:Golgi apparatus"/>
    <property type="evidence" value="ECO:0007005"/>
    <property type="project" value="TAIR"/>
</dbReference>
<dbReference type="GO" id="GO:0000325">
    <property type="term" value="C:plant-type vacuole"/>
    <property type="evidence" value="ECO:0007005"/>
    <property type="project" value="TAIR"/>
</dbReference>
<dbReference type="GO" id="GO:0005886">
    <property type="term" value="C:plasma membrane"/>
    <property type="evidence" value="ECO:0000314"/>
    <property type="project" value="TAIR"/>
</dbReference>
<dbReference type="GO" id="GO:0009536">
    <property type="term" value="C:plastid"/>
    <property type="evidence" value="ECO:0007005"/>
    <property type="project" value="TAIR"/>
</dbReference>
<dbReference type="GO" id="GO:0017064">
    <property type="term" value="F:fatty acid amide hydrolase activity"/>
    <property type="evidence" value="ECO:0007669"/>
    <property type="project" value="UniProtKB-EC"/>
</dbReference>
<dbReference type="GO" id="GO:0047412">
    <property type="term" value="F:N-(long-chain-acyl)ethanolamine deacylase activity"/>
    <property type="evidence" value="ECO:0000315"/>
    <property type="project" value="TAIR"/>
</dbReference>
<dbReference type="GO" id="GO:0042742">
    <property type="term" value="P:defense response to bacterium"/>
    <property type="evidence" value="ECO:0000315"/>
    <property type="project" value="TAIR"/>
</dbReference>
<dbReference type="GO" id="GO:0016042">
    <property type="term" value="P:lipid catabolic process"/>
    <property type="evidence" value="ECO:0007669"/>
    <property type="project" value="UniProtKB-KW"/>
</dbReference>
<dbReference type="GO" id="GO:0070291">
    <property type="term" value="P:N-acylethanolamine metabolic process"/>
    <property type="evidence" value="ECO:0000315"/>
    <property type="project" value="TAIR"/>
</dbReference>
<dbReference type="FunFam" id="3.90.1300.10:FF:000018">
    <property type="entry name" value="Fatty acid amide hydrolase"/>
    <property type="match status" value="1"/>
</dbReference>
<dbReference type="Gene3D" id="3.90.1300.10">
    <property type="entry name" value="Amidase signature (AS) domain"/>
    <property type="match status" value="1"/>
</dbReference>
<dbReference type="InterPro" id="IPR000120">
    <property type="entry name" value="Amidase"/>
</dbReference>
<dbReference type="InterPro" id="IPR020556">
    <property type="entry name" value="Amidase_CS"/>
</dbReference>
<dbReference type="InterPro" id="IPR023631">
    <property type="entry name" value="Amidase_dom"/>
</dbReference>
<dbReference type="InterPro" id="IPR036928">
    <property type="entry name" value="AS_sf"/>
</dbReference>
<dbReference type="PANTHER" id="PTHR11895:SF156">
    <property type="entry name" value="FATTY ACID AMIDE HYDROLASE"/>
    <property type="match status" value="1"/>
</dbReference>
<dbReference type="PANTHER" id="PTHR11895">
    <property type="entry name" value="TRANSAMIDASE"/>
    <property type="match status" value="1"/>
</dbReference>
<dbReference type="Pfam" id="PF01425">
    <property type="entry name" value="Amidase"/>
    <property type="match status" value="1"/>
</dbReference>
<dbReference type="SUPFAM" id="SSF75304">
    <property type="entry name" value="Amidase signature (AS) enzymes"/>
    <property type="match status" value="1"/>
</dbReference>
<dbReference type="PROSITE" id="PS00571">
    <property type="entry name" value="AMIDASES"/>
    <property type="match status" value="1"/>
</dbReference>
<organism>
    <name type="scientific">Arabidopsis thaliana</name>
    <name type="common">Mouse-ear cress</name>
    <dbReference type="NCBI Taxonomy" id="3702"/>
    <lineage>
        <taxon>Eukaryota</taxon>
        <taxon>Viridiplantae</taxon>
        <taxon>Streptophyta</taxon>
        <taxon>Embryophyta</taxon>
        <taxon>Tracheophyta</taxon>
        <taxon>Spermatophyta</taxon>
        <taxon>Magnoliopsida</taxon>
        <taxon>eudicotyledons</taxon>
        <taxon>Gunneridae</taxon>
        <taxon>Pentapetalae</taxon>
        <taxon>rosids</taxon>
        <taxon>malvids</taxon>
        <taxon>Brassicales</taxon>
        <taxon>Brassicaceae</taxon>
        <taxon>Camelineae</taxon>
        <taxon>Arabidopsis</taxon>
    </lineage>
</organism>
<sequence>MGKYQVMKRASEVDLSTVKYKAETMKAPHLTGLSFKLFVNLLEAPLIGSLIVDYLKKDNGMTKIFRNTVIPEEPMFRPEFPSQEPEHDVVIVGEDESPIDRLETALKCLPQYDPSRSLHADPVSSFRYWKIRDYAYAYRSKLTTPLQVAKRIISIIEEFGYDKPPTPFLIRFDANEVIKQAEASTRRFEQGNPISVLDGIFVTIKDDIDCLPHPTNGGTTWLHEDRSVEKDSAVVSKLRSCGAILLGKANMHELGMGTTGNNSNYGTTRNPHDPKRYTGGSSSGSAAIVAAGLCSAALGTDGGGSVRIPSALCGITGLKTTYGRTDMTGSLCEGGTVEIIGPLASSLEDAFLVYAAILGSSSADRYNLKPSPPCFPKLLSHNGSNAIGSLRLGKYTKWFNDVSSSDISDKCEDILKLLSNNHGCKVVEIVVPELEEMRAAHVISIGSPTLSSLTPYCEAGKNSKLSYDTRTSFAIFRSFSASDYIAAQCLRRRLMEYHLNIFKDVDVIVTPTTGMTAPVIPPDALKNGETNIQVTTDLMRFVLAANLLGFPAISVPVGYDKEGLPIGLQIMGRPWAEATVLGLAAAVEELAPVTKKPAIFYDILNTN</sequence>